<sequence>MSQPIYKRILLKLSGEALQGEDGLGIDPAILDRMAVEIKELVEMGVEVGVVLGGGNLFRGAKLAKAGMNRVVGDHMGMLATVMNGLAMRDSLFRADVNAKLMSAFQLNGICDTYNWSEAIKMLREKRVVIFSAGTGNPFFTTDSTACLRGIEIEADVVLKATKVDGVYDCDPAKNPDAKLYKNLTYAEVIDKELKVMDLSAFTLARDHGMPIRVFNMGKPGALRQVVTGTEEGTTIC</sequence>
<proteinExistence type="inferred from homology"/>
<reference key="1">
    <citation type="journal article" date="2005" name="J. Bacteriol.">
        <title>Genomic sequence of an otitis media isolate of nontypeable Haemophilus influenzae: comparative study with H. influenzae serotype d, strain KW20.</title>
        <authorList>
            <person name="Harrison A."/>
            <person name="Dyer D.W."/>
            <person name="Gillaspy A."/>
            <person name="Ray W.C."/>
            <person name="Mungur R."/>
            <person name="Carson M.B."/>
            <person name="Zhong H."/>
            <person name="Gipson J."/>
            <person name="Gipson M."/>
            <person name="Johnson L.S."/>
            <person name="Lewis L."/>
            <person name="Bakaletz L.O."/>
            <person name="Munson R.S. Jr."/>
        </authorList>
    </citation>
    <scope>NUCLEOTIDE SEQUENCE [LARGE SCALE GENOMIC DNA]</scope>
    <source>
        <strain>86-028NP</strain>
    </source>
</reference>
<organism>
    <name type="scientific">Haemophilus influenzae (strain 86-028NP)</name>
    <dbReference type="NCBI Taxonomy" id="281310"/>
    <lineage>
        <taxon>Bacteria</taxon>
        <taxon>Pseudomonadati</taxon>
        <taxon>Pseudomonadota</taxon>
        <taxon>Gammaproteobacteria</taxon>
        <taxon>Pasteurellales</taxon>
        <taxon>Pasteurellaceae</taxon>
        <taxon>Haemophilus</taxon>
    </lineage>
</organism>
<comment type="function">
    <text evidence="1">Catalyzes the reversible phosphorylation of UMP to UDP.</text>
</comment>
<comment type="catalytic activity">
    <reaction evidence="1">
        <text>UMP + ATP = UDP + ADP</text>
        <dbReference type="Rhea" id="RHEA:24400"/>
        <dbReference type="ChEBI" id="CHEBI:30616"/>
        <dbReference type="ChEBI" id="CHEBI:57865"/>
        <dbReference type="ChEBI" id="CHEBI:58223"/>
        <dbReference type="ChEBI" id="CHEBI:456216"/>
        <dbReference type="EC" id="2.7.4.22"/>
    </reaction>
</comment>
<comment type="activity regulation">
    <text evidence="1">Allosterically activated by GTP. Inhibited by UTP.</text>
</comment>
<comment type="pathway">
    <text evidence="1">Pyrimidine metabolism; CTP biosynthesis via de novo pathway; UDP from UMP (UMPK route): step 1/1.</text>
</comment>
<comment type="subunit">
    <text evidence="1">Homohexamer.</text>
</comment>
<comment type="subcellular location">
    <subcellularLocation>
        <location evidence="1">Cytoplasm</location>
    </subcellularLocation>
</comment>
<comment type="similarity">
    <text evidence="1">Belongs to the UMP kinase family.</text>
</comment>
<gene>
    <name evidence="1" type="primary">pyrH</name>
    <name type="ordered locus">NTHI1225</name>
</gene>
<name>PYRH_HAEI8</name>
<feature type="chain" id="PRO_1000053928" description="Uridylate kinase">
    <location>
        <begin position="1"/>
        <end position="237"/>
    </location>
</feature>
<feature type="region of interest" description="Involved in allosteric activation by GTP" evidence="1">
    <location>
        <begin position="20"/>
        <end position="25"/>
    </location>
</feature>
<feature type="binding site" evidence="1">
    <location>
        <begin position="12"/>
        <end position="15"/>
    </location>
    <ligand>
        <name>ATP</name>
        <dbReference type="ChEBI" id="CHEBI:30616"/>
    </ligand>
</feature>
<feature type="binding site" evidence="1">
    <location>
        <position position="54"/>
    </location>
    <ligand>
        <name>UMP</name>
        <dbReference type="ChEBI" id="CHEBI:57865"/>
    </ligand>
</feature>
<feature type="binding site" evidence="1">
    <location>
        <position position="55"/>
    </location>
    <ligand>
        <name>ATP</name>
        <dbReference type="ChEBI" id="CHEBI:30616"/>
    </ligand>
</feature>
<feature type="binding site" evidence="1">
    <location>
        <position position="59"/>
    </location>
    <ligand>
        <name>ATP</name>
        <dbReference type="ChEBI" id="CHEBI:30616"/>
    </ligand>
</feature>
<feature type="binding site" evidence="1">
    <location>
        <position position="74"/>
    </location>
    <ligand>
        <name>UMP</name>
        <dbReference type="ChEBI" id="CHEBI:57865"/>
    </ligand>
</feature>
<feature type="binding site" evidence="1">
    <location>
        <begin position="135"/>
        <end position="142"/>
    </location>
    <ligand>
        <name>UMP</name>
        <dbReference type="ChEBI" id="CHEBI:57865"/>
    </ligand>
</feature>
<feature type="binding site" evidence="1">
    <location>
        <position position="162"/>
    </location>
    <ligand>
        <name>ATP</name>
        <dbReference type="ChEBI" id="CHEBI:30616"/>
    </ligand>
</feature>
<feature type="binding site" evidence="1">
    <location>
        <position position="168"/>
    </location>
    <ligand>
        <name>ATP</name>
        <dbReference type="ChEBI" id="CHEBI:30616"/>
    </ligand>
</feature>
<feature type="binding site" evidence="1">
    <location>
        <position position="171"/>
    </location>
    <ligand>
        <name>ATP</name>
        <dbReference type="ChEBI" id="CHEBI:30616"/>
    </ligand>
</feature>
<dbReference type="EC" id="2.7.4.22" evidence="1"/>
<dbReference type="EMBL" id="CP000057">
    <property type="protein sequence ID" value="AAX88075.1"/>
    <property type="molecule type" value="Genomic_DNA"/>
</dbReference>
<dbReference type="RefSeq" id="WP_005659351.1">
    <property type="nucleotide sequence ID" value="NC_007146.2"/>
</dbReference>
<dbReference type="SMR" id="Q4QLM2"/>
<dbReference type="KEGG" id="hit:NTHI1225"/>
<dbReference type="HOGENOM" id="CLU_033861_0_0_6"/>
<dbReference type="UniPathway" id="UPA00159">
    <property type="reaction ID" value="UER00275"/>
</dbReference>
<dbReference type="Proteomes" id="UP000002525">
    <property type="component" value="Chromosome"/>
</dbReference>
<dbReference type="GO" id="GO:0005829">
    <property type="term" value="C:cytosol"/>
    <property type="evidence" value="ECO:0007669"/>
    <property type="project" value="TreeGrafter"/>
</dbReference>
<dbReference type="GO" id="GO:0005524">
    <property type="term" value="F:ATP binding"/>
    <property type="evidence" value="ECO:0007669"/>
    <property type="project" value="UniProtKB-KW"/>
</dbReference>
<dbReference type="GO" id="GO:0033862">
    <property type="term" value="F:UMP kinase activity"/>
    <property type="evidence" value="ECO:0007669"/>
    <property type="project" value="UniProtKB-EC"/>
</dbReference>
<dbReference type="GO" id="GO:0044210">
    <property type="term" value="P:'de novo' CTP biosynthetic process"/>
    <property type="evidence" value="ECO:0007669"/>
    <property type="project" value="UniProtKB-UniRule"/>
</dbReference>
<dbReference type="GO" id="GO:0006225">
    <property type="term" value="P:UDP biosynthetic process"/>
    <property type="evidence" value="ECO:0007669"/>
    <property type="project" value="TreeGrafter"/>
</dbReference>
<dbReference type="CDD" id="cd04254">
    <property type="entry name" value="AAK_UMPK-PyrH-Ec"/>
    <property type="match status" value="1"/>
</dbReference>
<dbReference type="FunFam" id="3.40.1160.10:FF:000001">
    <property type="entry name" value="Uridylate kinase"/>
    <property type="match status" value="1"/>
</dbReference>
<dbReference type="Gene3D" id="3.40.1160.10">
    <property type="entry name" value="Acetylglutamate kinase-like"/>
    <property type="match status" value="1"/>
</dbReference>
<dbReference type="HAMAP" id="MF_01220_B">
    <property type="entry name" value="PyrH_B"/>
    <property type="match status" value="1"/>
</dbReference>
<dbReference type="InterPro" id="IPR036393">
    <property type="entry name" value="AceGlu_kinase-like_sf"/>
</dbReference>
<dbReference type="InterPro" id="IPR001048">
    <property type="entry name" value="Asp/Glu/Uridylate_kinase"/>
</dbReference>
<dbReference type="InterPro" id="IPR011817">
    <property type="entry name" value="Uridylate_kinase"/>
</dbReference>
<dbReference type="InterPro" id="IPR015963">
    <property type="entry name" value="Uridylate_kinase_bac"/>
</dbReference>
<dbReference type="NCBIfam" id="TIGR02075">
    <property type="entry name" value="pyrH_bact"/>
    <property type="match status" value="1"/>
</dbReference>
<dbReference type="PANTHER" id="PTHR42833">
    <property type="entry name" value="URIDYLATE KINASE"/>
    <property type="match status" value="1"/>
</dbReference>
<dbReference type="PANTHER" id="PTHR42833:SF4">
    <property type="entry name" value="URIDYLATE KINASE PUMPKIN, CHLOROPLASTIC"/>
    <property type="match status" value="1"/>
</dbReference>
<dbReference type="Pfam" id="PF00696">
    <property type="entry name" value="AA_kinase"/>
    <property type="match status" value="1"/>
</dbReference>
<dbReference type="PIRSF" id="PIRSF005650">
    <property type="entry name" value="Uridylate_kin"/>
    <property type="match status" value="1"/>
</dbReference>
<dbReference type="SUPFAM" id="SSF53633">
    <property type="entry name" value="Carbamate kinase-like"/>
    <property type="match status" value="1"/>
</dbReference>
<accession>Q4QLM2</accession>
<protein>
    <recommendedName>
        <fullName evidence="1">Uridylate kinase</fullName>
        <shortName evidence="1">UK</shortName>
        <ecNumber evidence="1">2.7.4.22</ecNumber>
    </recommendedName>
    <alternativeName>
        <fullName evidence="1">Uridine monophosphate kinase</fullName>
        <shortName evidence="1">UMP kinase</shortName>
        <shortName evidence="1">UMPK</shortName>
    </alternativeName>
</protein>
<keyword id="KW-0021">Allosteric enzyme</keyword>
<keyword id="KW-0067">ATP-binding</keyword>
<keyword id="KW-0963">Cytoplasm</keyword>
<keyword id="KW-0418">Kinase</keyword>
<keyword id="KW-0547">Nucleotide-binding</keyword>
<keyword id="KW-0665">Pyrimidine biosynthesis</keyword>
<keyword id="KW-0808">Transferase</keyword>
<evidence type="ECO:0000255" key="1">
    <source>
        <dbReference type="HAMAP-Rule" id="MF_01220"/>
    </source>
</evidence>